<organism>
    <name type="scientific">Halobacterium salinarum (strain ATCC 700922 / JCM 11081 / NRC-1)</name>
    <name type="common">Halobacterium halobium</name>
    <dbReference type="NCBI Taxonomy" id="64091"/>
    <lineage>
        <taxon>Archaea</taxon>
        <taxon>Methanobacteriati</taxon>
        <taxon>Methanobacteriota</taxon>
        <taxon>Stenosarchaea group</taxon>
        <taxon>Halobacteria</taxon>
        <taxon>Halobacteriales</taxon>
        <taxon>Halobacteriaceae</taxon>
        <taxon>Halobacterium</taxon>
        <taxon>Halobacterium salinarum NRC-34001</taxon>
    </lineage>
</organism>
<sequence>MTDHDERTFVMVKPDGVQRGLIGDIVTRLETKGLKMVGGKFMRIDEELAHEHYAEHEDKPFFDGLVSFITSGPVFAMVWEGADATRQVRQLMGATDAQDAAPGTIRGDYGNDLGHNLIHGSDHEDEGANEREIALFFDDDELVDWDRDASAWVYEDLADHD</sequence>
<comment type="function">
    <text evidence="1">Major role in the synthesis of nucleoside triphosphates other than ATP. The ATP gamma phosphate is transferred to the NDP beta phosphate via a ping-pong mechanism, using a phosphorylated active-site intermediate.</text>
</comment>
<comment type="catalytic activity">
    <reaction evidence="1">
        <text>a 2'-deoxyribonucleoside 5'-diphosphate + ATP = a 2'-deoxyribonucleoside 5'-triphosphate + ADP</text>
        <dbReference type="Rhea" id="RHEA:44640"/>
        <dbReference type="ChEBI" id="CHEBI:30616"/>
        <dbReference type="ChEBI" id="CHEBI:61560"/>
        <dbReference type="ChEBI" id="CHEBI:73316"/>
        <dbReference type="ChEBI" id="CHEBI:456216"/>
        <dbReference type="EC" id="2.7.4.6"/>
    </reaction>
</comment>
<comment type="catalytic activity">
    <reaction evidence="1">
        <text>a ribonucleoside 5'-diphosphate + ATP = a ribonucleoside 5'-triphosphate + ADP</text>
        <dbReference type="Rhea" id="RHEA:18113"/>
        <dbReference type="ChEBI" id="CHEBI:30616"/>
        <dbReference type="ChEBI" id="CHEBI:57930"/>
        <dbReference type="ChEBI" id="CHEBI:61557"/>
        <dbReference type="ChEBI" id="CHEBI:456216"/>
        <dbReference type="EC" id="2.7.4.6"/>
    </reaction>
</comment>
<comment type="cofactor">
    <cofactor evidence="1">
        <name>Mg(2+)</name>
        <dbReference type="ChEBI" id="CHEBI:18420"/>
    </cofactor>
</comment>
<comment type="subcellular location">
    <subcellularLocation>
        <location evidence="1">Cytoplasm</location>
    </subcellularLocation>
</comment>
<comment type="similarity">
    <text evidence="1">Belongs to the NDK family.</text>
</comment>
<evidence type="ECO:0000255" key="1">
    <source>
        <dbReference type="HAMAP-Rule" id="MF_00451"/>
    </source>
</evidence>
<evidence type="ECO:0000303" key="2">
    <source>
    </source>
</evidence>
<evidence type="ECO:0000305" key="3">
    <source>
    </source>
</evidence>
<evidence type="ECO:0007829" key="4">
    <source>
        <dbReference type="PDB" id="2AZ1"/>
    </source>
</evidence>
<evidence type="ECO:0007829" key="5">
    <source>
        <dbReference type="PDB" id="2AZ3"/>
    </source>
</evidence>
<feature type="chain" id="PRO_0000137089" description="Nucleoside diphosphate kinase">
    <location>
        <begin position="1"/>
        <end position="161"/>
    </location>
</feature>
<feature type="active site" description="Pros-phosphohistidine intermediate" evidence="1">
    <location>
        <position position="119"/>
    </location>
</feature>
<feature type="binding site" evidence="1 3">
    <location>
        <position position="13"/>
    </location>
    <ligand>
        <name>ATP</name>
        <dbReference type="ChEBI" id="CHEBI:30616"/>
    </ligand>
</feature>
<feature type="binding site" evidence="1 3">
    <location>
        <position position="61"/>
    </location>
    <ligand>
        <name>ATP</name>
        <dbReference type="ChEBI" id="CHEBI:30616"/>
    </ligand>
</feature>
<feature type="binding site" evidence="1 3">
    <location>
        <position position="89"/>
    </location>
    <ligand>
        <name>ATP</name>
        <dbReference type="ChEBI" id="CHEBI:30616"/>
    </ligand>
</feature>
<feature type="binding site" evidence="1 3">
    <location>
        <position position="95"/>
    </location>
    <ligand>
        <name>ATP</name>
        <dbReference type="ChEBI" id="CHEBI:30616"/>
    </ligand>
</feature>
<feature type="binding site" evidence="1 3">
    <location>
        <position position="106"/>
    </location>
    <ligand>
        <name>ATP</name>
        <dbReference type="ChEBI" id="CHEBI:30616"/>
    </ligand>
</feature>
<feature type="binding site" evidence="1 3">
    <location>
        <position position="116"/>
    </location>
    <ligand>
        <name>ATP</name>
        <dbReference type="ChEBI" id="CHEBI:30616"/>
    </ligand>
</feature>
<feature type="strand" evidence="5">
    <location>
        <begin position="7"/>
        <end position="12"/>
    </location>
</feature>
<feature type="helix" evidence="5">
    <location>
        <begin position="14"/>
        <end position="18"/>
    </location>
</feature>
<feature type="helix" evidence="5">
    <location>
        <begin position="22"/>
        <end position="31"/>
    </location>
</feature>
<feature type="strand" evidence="5">
    <location>
        <begin position="35"/>
        <end position="42"/>
    </location>
</feature>
<feature type="helix" evidence="5">
    <location>
        <begin position="46"/>
        <end position="52"/>
    </location>
</feature>
<feature type="helix" evidence="5">
    <location>
        <begin position="54"/>
        <end position="56"/>
    </location>
</feature>
<feature type="helix" evidence="5">
    <location>
        <begin position="62"/>
        <end position="69"/>
    </location>
</feature>
<feature type="strand" evidence="5">
    <location>
        <begin position="74"/>
        <end position="81"/>
    </location>
</feature>
<feature type="helix" evidence="5">
    <location>
        <begin position="84"/>
        <end position="92"/>
    </location>
</feature>
<feature type="helix" evidence="5">
    <location>
        <begin position="97"/>
        <end position="99"/>
    </location>
</feature>
<feature type="helix" evidence="5">
    <location>
        <begin position="105"/>
        <end position="109"/>
    </location>
</feature>
<feature type="strand" evidence="5">
    <location>
        <begin position="113"/>
        <end position="115"/>
    </location>
</feature>
<feature type="strand" evidence="5">
    <location>
        <begin position="117"/>
        <end position="120"/>
    </location>
</feature>
<feature type="helix" evidence="5">
    <location>
        <begin position="128"/>
        <end position="136"/>
    </location>
</feature>
<feature type="helix" evidence="4">
    <location>
        <begin position="139"/>
        <end position="141"/>
    </location>
</feature>
<feature type="helix" evidence="5">
    <location>
        <begin position="150"/>
        <end position="153"/>
    </location>
</feature>
<feature type="helix" evidence="4">
    <location>
        <begin position="155"/>
        <end position="157"/>
    </location>
</feature>
<dbReference type="EC" id="2.7.4.6" evidence="1"/>
<dbReference type="EMBL" id="AB036344">
    <property type="protein sequence ID" value="BAB17308.1"/>
    <property type="molecule type" value="Genomic_DNA"/>
</dbReference>
<dbReference type="EMBL" id="AE004437">
    <property type="protein sequence ID" value="AAG19540.1"/>
    <property type="molecule type" value="Genomic_DNA"/>
</dbReference>
<dbReference type="PIR" id="H84271">
    <property type="entry name" value="H84271"/>
</dbReference>
<dbReference type="RefSeq" id="WP_010902835.1">
    <property type="nucleotide sequence ID" value="NC_002607.1"/>
</dbReference>
<dbReference type="PDB" id="2AZ1">
    <property type="method" value="X-ray"/>
    <property type="resolution" value="2.35 A"/>
    <property type="chains" value="A/B/C/D/E/F=1-161"/>
</dbReference>
<dbReference type="PDB" id="2AZ3">
    <property type="method" value="X-ray"/>
    <property type="resolution" value="2.20 A"/>
    <property type="chains" value="A/B/C/D/E/F/G/H/I=1-161"/>
</dbReference>
<dbReference type="PDBsum" id="2AZ1"/>
<dbReference type="PDBsum" id="2AZ3"/>
<dbReference type="SMR" id="P61136"/>
<dbReference type="FunCoup" id="P61136">
    <property type="interactions" value="217"/>
</dbReference>
<dbReference type="STRING" id="64091.VNG_1160G"/>
<dbReference type="PaxDb" id="64091-VNG_1160G"/>
<dbReference type="GeneID" id="89349516"/>
<dbReference type="KEGG" id="hal:VNG_1160G"/>
<dbReference type="PATRIC" id="fig|64091.14.peg.887"/>
<dbReference type="HOGENOM" id="CLU_060216_6_3_2"/>
<dbReference type="InParanoid" id="P61136"/>
<dbReference type="OrthoDB" id="6874at2157"/>
<dbReference type="PhylomeDB" id="P61136"/>
<dbReference type="BioCyc" id="MetaCyc:MONOMER-15776"/>
<dbReference type="BRENDA" id="2.7.4.6">
    <property type="organism ID" value="2552"/>
</dbReference>
<dbReference type="EvolutionaryTrace" id="P61136"/>
<dbReference type="Proteomes" id="UP000000554">
    <property type="component" value="Chromosome"/>
</dbReference>
<dbReference type="GO" id="GO:0005737">
    <property type="term" value="C:cytoplasm"/>
    <property type="evidence" value="ECO:0007669"/>
    <property type="project" value="UniProtKB-SubCell"/>
</dbReference>
<dbReference type="GO" id="GO:0005524">
    <property type="term" value="F:ATP binding"/>
    <property type="evidence" value="ECO:0007669"/>
    <property type="project" value="UniProtKB-UniRule"/>
</dbReference>
<dbReference type="GO" id="GO:0046872">
    <property type="term" value="F:metal ion binding"/>
    <property type="evidence" value="ECO:0007669"/>
    <property type="project" value="UniProtKB-KW"/>
</dbReference>
<dbReference type="GO" id="GO:0004550">
    <property type="term" value="F:nucleoside diphosphate kinase activity"/>
    <property type="evidence" value="ECO:0007669"/>
    <property type="project" value="UniProtKB-UniRule"/>
</dbReference>
<dbReference type="GO" id="GO:0006241">
    <property type="term" value="P:CTP biosynthetic process"/>
    <property type="evidence" value="ECO:0007669"/>
    <property type="project" value="UniProtKB-UniRule"/>
</dbReference>
<dbReference type="GO" id="GO:0006183">
    <property type="term" value="P:GTP biosynthetic process"/>
    <property type="evidence" value="ECO:0007669"/>
    <property type="project" value="UniProtKB-UniRule"/>
</dbReference>
<dbReference type="GO" id="GO:0006228">
    <property type="term" value="P:UTP biosynthetic process"/>
    <property type="evidence" value="ECO:0007669"/>
    <property type="project" value="UniProtKB-UniRule"/>
</dbReference>
<dbReference type="CDD" id="cd04413">
    <property type="entry name" value="NDPk_I"/>
    <property type="match status" value="1"/>
</dbReference>
<dbReference type="FunFam" id="3.30.70.141:FF:000003">
    <property type="entry name" value="Nucleoside diphosphate kinase"/>
    <property type="match status" value="1"/>
</dbReference>
<dbReference type="Gene3D" id="3.30.70.141">
    <property type="entry name" value="Nucleoside diphosphate kinase-like domain"/>
    <property type="match status" value="1"/>
</dbReference>
<dbReference type="HAMAP" id="MF_00451">
    <property type="entry name" value="NDP_kinase"/>
    <property type="match status" value="1"/>
</dbReference>
<dbReference type="InterPro" id="IPR034907">
    <property type="entry name" value="NDK-like_dom"/>
</dbReference>
<dbReference type="InterPro" id="IPR036850">
    <property type="entry name" value="NDK-like_dom_sf"/>
</dbReference>
<dbReference type="InterPro" id="IPR001564">
    <property type="entry name" value="Nucleoside_diP_kinase"/>
</dbReference>
<dbReference type="NCBIfam" id="NF001908">
    <property type="entry name" value="PRK00668.1"/>
    <property type="match status" value="1"/>
</dbReference>
<dbReference type="PANTHER" id="PTHR11349">
    <property type="entry name" value="NUCLEOSIDE DIPHOSPHATE KINASE"/>
    <property type="match status" value="1"/>
</dbReference>
<dbReference type="Pfam" id="PF00334">
    <property type="entry name" value="NDK"/>
    <property type="match status" value="1"/>
</dbReference>
<dbReference type="PRINTS" id="PR01243">
    <property type="entry name" value="NUCDPKINASE"/>
</dbReference>
<dbReference type="SMART" id="SM00562">
    <property type="entry name" value="NDK"/>
    <property type="match status" value="1"/>
</dbReference>
<dbReference type="SUPFAM" id="SSF54919">
    <property type="entry name" value="Nucleoside diphosphate kinase, NDK"/>
    <property type="match status" value="1"/>
</dbReference>
<dbReference type="PROSITE" id="PS51374">
    <property type="entry name" value="NDPK_LIKE"/>
    <property type="match status" value="1"/>
</dbReference>
<gene>
    <name evidence="1" type="primary">ndk</name>
    <name type="ordered locus">VNG_1160G</name>
</gene>
<accession>P61136</accession>
<accession>P61137</accession>
<accession>Q9HQH5</accession>
<proteinExistence type="evidence at protein level"/>
<reference key="1">
    <citation type="submission" date="1999-12" db="EMBL/GenBank/DDBJ databases">
        <title>NDK from Halobacterium cutirubrum.</title>
        <authorList>
            <person name="Ishibashi M."/>
            <person name="Hiratsuka K."/>
            <person name="Yonezawa Y."/>
            <person name="Tokunaga H."/>
            <person name="Tokunaga M."/>
        </authorList>
    </citation>
    <scope>NUCLEOTIDE SEQUENCE [GENOMIC DNA]</scope>
</reference>
<reference key="2">
    <citation type="journal article" date="2000" name="Proc. Natl. Acad. Sci. U.S.A.">
        <title>Genome sequence of Halobacterium species NRC-1.</title>
        <authorList>
            <person name="Ng W.V."/>
            <person name="Kennedy S.P."/>
            <person name="Mahairas G.G."/>
            <person name="Berquist B."/>
            <person name="Pan M."/>
            <person name="Shukla H.D."/>
            <person name="Lasky S.R."/>
            <person name="Baliga N.S."/>
            <person name="Thorsson V."/>
            <person name="Sbrogna J."/>
            <person name="Swartzell S."/>
            <person name="Weir D."/>
            <person name="Hall J."/>
            <person name="Dahl T.A."/>
            <person name="Welti R."/>
            <person name="Goo Y.A."/>
            <person name="Leithauser B."/>
            <person name="Keller K."/>
            <person name="Cruz R."/>
            <person name="Danson M.J."/>
            <person name="Hough D.W."/>
            <person name="Maddocks D.G."/>
            <person name="Jablonski P.E."/>
            <person name="Krebs M.P."/>
            <person name="Angevine C.M."/>
            <person name="Dale H."/>
            <person name="Isenbarger T.A."/>
            <person name="Peck R.F."/>
            <person name="Pohlschroder M."/>
            <person name="Spudich J.L."/>
            <person name="Jung K.-H."/>
            <person name="Alam M."/>
            <person name="Freitas T."/>
            <person name="Hou S."/>
            <person name="Daniels C.J."/>
            <person name="Dennis P.P."/>
            <person name="Omer A.D."/>
            <person name="Ebhardt H."/>
            <person name="Lowe T.M."/>
            <person name="Liang P."/>
            <person name="Riley M."/>
            <person name="Hood L."/>
            <person name="DasSarma S."/>
        </authorList>
    </citation>
    <scope>NUCLEOTIDE SEQUENCE [LARGE SCALE GENOMIC DNA]</scope>
    <source>
        <strain>ATCC 700922 / JCM 11081 / NRC-1</strain>
    </source>
</reference>
<reference key="3">
    <citation type="journal article" date="2005" name="FEBS Lett.">
        <title>Structure of a halophilic nucleoside diphosphate kinase from Halobacterium salinarum.</title>
        <authorList>
            <person name="Besir H."/>
            <person name="Zeth K."/>
            <person name="Bracher A."/>
            <person name="Heider U."/>
            <person name="Ishibashi M."/>
            <person name="Tokunaga M."/>
            <person name="Oesterhelt D."/>
        </authorList>
    </citation>
    <scope>X-RAY CRYSTALLOGRAPHY (2.2 ANGSTROMS) IN COMPLEX WITH ATP ANALOG</scope>
</reference>
<name>NDK_HALSA</name>
<keyword id="KW-0002">3D-structure</keyword>
<keyword id="KW-0067">ATP-binding</keyword>
<keyword id="KW-0963">Cytoplasm</keyword>
<keyword id="KW-0418">Kinase</keyword>
<keyword id="KW-0460">Magnesium</keyword>
<keyword id="KW-0479">Metal-binding</keyword>
<keyword id="KW-0546">Nucleotide metabolism</keyword>
<keyword id="KW-0547">Nucleotide-binding</keyword>
<keyword id="KW-0597">Phosphoprotein</keyword>
<keyword id="KW-1185">Reference proteome</keyword>
<keyword id="KW-0808">Transferase</keyword>
<protein>
    <recommendedName>
        <fullName evidence="1 2">Nucleoside diphosphate kinase</fullName>
        <shortName evidence="1">NDK</shortName>
        <shortName evidence="1">NDP kinase</shortName>
        <ecNumber evidence="1">2.7.4.6</ecNumber>
    </recommendedName>
    <alternativeName>
        <fullName evidence="1">Nucleoside-2-P kinase</fullName>
    </alternativeName>
</protein>